<proteinExistence type="inferred from homology"/>
<sequence>MPDASDADLLDGQALSQAVRDEVKADIQAWTDDHRPPFLSAVLVGDNPASKAYVRGKEKDAAEVGIETETHHLDADTSQSELLDLVHDLNADASVDGILVQLPLPDHVDERTVIDAVDPSKDVDGFHPENLGRLMRGTPRYIPATPYGIMEMLSRSDIDPESMDAVIVGRSNIVGKPLANLLLRRTANATVTVCHSRTKDLAAHTRRADLLVAAAGQAAFIDADMVKEDAVVIDVGINRVDDPSTDRGYRLVGDVDFEGVRPKARRITPVPGGVGLMTRAMLLKNTLKAARLRATSA</sequence>
<feature type="chain" id="PRO_0000268489" description="Bifunctional protein FolD">
    <location>
        <begin position="1"/>
        <end position="297"/>
    </location>
</feature>
<feature type="binding site" evidence="1">
    <location>
        <begin position="169"/>
        <end position="171"/>
    </location>
    <ligand>
        <name>NADP(+)</name>
        <dbReference type="ChEBI" id="CHEBI:58349"/>
    </ligand>
</feature>
<feature type="binding site" evidence="1">
    <location>
        <position position="196"/>
    </location>
    <ligand>
        <name>NADP(+)</name>
        <dbReference type="ChEBI" id="CHEBI:58349"/>
    </ligand>
</feature>
<feature type="binding site" evidence="1">
    <location>
        <position position="237"/>
    </location>
    <ligand>
        <name>NADP(+)</name>
        <dbReference type="ChEBI" id="CHEBI:58349"/>
    </ligand>
</feature>
<name>FOLD_SALRD</name>
<accession>Q2S1I0</accession>
<keyword id="KW-0028">Amino-acid biosynthesis</keyword>
<keyword id="KW-0368">Histidine biosynthesis</keyword>
<keyword id="KW-0378">Hydrolase</keyword>
<keyword id="KW-0486">Methionine biosynthesis</keyword>
<keyword id="KW-0511">Multifunctional enzyme</keyword>
<keyword id="KW-0521">NADP</keyword>
<keyword id="KW-0554">One-carbon metabolism</keyword>
<keyword id="KW-0560">Oxidoreductase</keyword>
<keyword id="KW-0658">Purine biosynthesis</keyword>
<keyword id="KW-1185">Reference proteome</keyword>
<comment type="function">
    <text evidence="1">Catalyzes the oxidation of 5,10-methylenetetrahydrofolate to 5,10-methenyltetrahydrofolate and then the hydrolysis of 5,10-methenyltetrahydrofolate to 10-formyltetrahydrofolate.</text>
</comment>
<comment type="catalytic activity">
    <reaction evidence="1">
        <text>(6R)-5,10-methylene-5,6,7,8-tetrahydrofolate + NADP(+) = (6R)-5,10-methenyltetrahydrofolate + NADPH</text>
        <dbReference type="Rhea" id="RHEA:22812"/>
        <dbReference type="ChEBI" id="CHEBI:15636"/>
        <dbReference type="ChEBI" id="CHEBI:57455"/>
        <dbReference type="ChEBI" id="CHEBI:57783"/>
        <dbReference type="ChEBI" id="CHEBI:58349"/>
        <dbReference type="EC" id="1.5.1.5"/>
    </reaction>
</comment>
<comment type="catalytic activity">
    <reaction evidence="1">
        <text>(6R)-5,10-methenyltetrahydrofolate + H2O = (6R)-10-formyltetrahydrofolate + H(+)</text>
        <dbReference type="Rhea" id="RHEA:23700"/>
        <dbReference type="ChEBI" id="CHEBI:15377"/>
        <dbReference type="ChEBI" id="CHEBI:15378"/>
        <dbReference type="ChEBI" id="CHEBI:57455"/>
        <dbReference type="ChEBI" id="CHEBI:195366"/>
        <dbReference type="EC" id="3.5.4.9"/>
    </reaction>
</comment>
<comment type="pathway">
    <text evidence="1">One-carbon metabolism; tetrahydrofolate interconversion.</text>
</comment>
<comment type="subunit">
    <text evidence="1">Homodimer.</text>
</comment>
<comment type="similarity">
    <text evidence="1">Belongs to the tetrahydrofolate dehydrogenase/cyclohydrolase family.</text>
</comment>
<reference key="1">
    <citation type="journal article" date="2005" name="Proc. Natl. Acad. Sci. U.S.A.">
        <title>The genome of Salinibacter ruber: convergence and gene exchange among hyperhalophilic bacteria and archaea.</title>
        <authorList>
            <person name="Mongodin E.F."/>
            <person name="Nelson K.E."/>
            <person name="Daugherty S."/>
            <person name="DeBoy R.T."/>
            <person name="Wister J."/>
            <person name="Khouri H."/>
            <person name="Weidman J."/>
            <person name="Walsh D.A."/>
            <person name="Papke R.T."/>
            <person name="Sanchez Perez G."/>
            <person name="Sharma A.K."/>
            <person name="Nesbo C.L."/>
            <person name="MacLeod D."/>
            <person name="Bapteste E."/>
            <person name="Doolittle W.F."/>
            <person name="Charlebois R.L."/>
            <person name="Legault B."/>
            <person name="Rodriguez-Valera F."/>
        </authorList>
    </citation>
    <scope>NUCLEOTIDE SEQUENCE [LARGE SCALE GENOMIC DNA]</scope>
    <source>
        <strain>DSM 13855 / CECT 5946 / M31</strain>
    </source>
</reference>
<dbReference type="EC" id="1.5.1.5" evidence="1"/>
<dbReference type="EC" id="3.5.4.9" evidence="1"/>
<dbReference type="EMBL" id="CP000159">
    <property type="protein sequence ID" value="ABC45748.1"/>
    <property type="molecule type" value="Genomic_DNA"/>
</dbReference>
<dbReference type="RefSeq" id="WP_011404576.1">
    <property type="nucleotide sequence ID" value="NC_007677.1"/>
</dbReference>
<dbReference type="RefSeq" id="YP_445951.1">
    <property type="nucleotide sequence ID" value="NC_007677.1"/>
</dbReference>
<dbReference type="SMR" id="Q2S1I0"/>
<dbReference type="STRING" id="309807.SRU_1839"/>
<dbReference type="EnsemblBacteria" id="ABC45748">
    <property type="protein sequence ID" value="ABC45748"/>
    <property type="gene ID" value="SRU_1839"/>
</dbReference>
<dbReference type="KEGG" id="sru:SRU_1839"/>
<dbReference type="PATRIC" id="fig|309807.25.peg.1906"/>
<dbReference type="eggNOG" id="COG0190">
    <property type="taxonomic scope" value="Bacteria"/>
</dbReference>
<dbReference type="HOGENOM" id="CLU_034045_2_1_10"/>
<dbReference type="OrthoDB" id="9803580at2"/>
<dbReference type="UniPathway" id="UPA00193"/>
<dbReference type="Proteomes" id="UP000008674">
    <property type="component" value="Chromosome"/>
</dbReference>
<dbReference type="GO" id="GO:0005829">
    <property type="term" value="C:cytosol"/>
    <property type="evidence" value="ECO:0007669"/>
    <property type="project" value="TreeGrafter"/>
</dbReference>
<dbReference type="GO" id="GO:0004477">
    <property type="term" value="F:methenyltetrahydrofolate cyclohydrolase activity"/>
    <property type="evidence" value="ECO:0007669"/>
    <property type="project" value="UniProtKB-UniRule"/>
</dbReference>
<dbReference type="GO" id="GO:0004488">
    <property type="term" value="F:methylenetetrahydrofolate dehydrogenase (NADP+) activity"/>
    <property type="evidence" value="ECO:0007669"/>
    <property type="project" value="UniProtKB-UniRule"/>
</dbReference>
<dbReference type="GO" id="GO:0000105">
    <property type="term" value="P:L-histidine biosynthetic process"/>
    <property type="evidence" value="ECO:0007669"/>
    <property type="project" value="UniProtKB-KW"/>
</dbReference>
<dbReference type="GO" id="GO:0009086">
    <property type="term" value="P:methionine biosynthetic process"/>
    <property type="evidence" value="ECO:0007669"/>
    <property type="project" value="UniProtKB-KW"/>
</dbReference>
<dbReference type="GO" id="GO:0006164">
    <property type="term" value="P:purine nucleotide biosynthetic process"/>
    <property type="evidence" value="ECO:0007669"/>
    <property type="project" value="UniProtKB-KW"/>
</dbReference>
<dbReference type="GO" id="GO:0035999">
    <property type="term" value="P:tetrahydrofolate interconversion"/>
    <property type="evidence" value="ECO:0007669"/>
    <property type="project" value="UniProtKB-UniRule"/>
</dbReference>
<dbReference type="CDD" id="cd01080">
    <property type="entry name" value="NAD_bind_m-THF_DH_Cyclohyd"/>
    <property type="match status" value="1"/>
</dbReference>
<dbReference type="FunFam" id="3.40.50.720:FF:000189">
    <property type="entry name" value="Bifunctional protein FolD"/>
    <property type="match status" value="1"/>
</dbReference>
<dbReference type="FunFam" id="3.40.50.10860:FF:000005">
    <property type="entry name" value="C-1-tetrahydrofolate synthase, cytoplasmic, putative"/>
    <property type="match status" value="1"/>
</dbReference>
<dbReference type="Gene3D" id="3.40.50.10860">
    <property type="entry name" value="Leucine Dehydrogenase, chain A, domain 1"/>
    <property type="match status" value="1"/>
</dbReference>
<dbReference type="Gene3D" id="3.40.50.720">
    <property type="entry name" value="NAD(P)-binding Rossmann-like Domain"/>
    <property type="match status" value="1"/>
</dbReference>
<dbReference type="HAMAP" id="MF_01576">
    <property type="entry name" value="THF_DHG_CYH"/>
    <property type="match status" value="1"/>
</dbReference>
<dbReference type="InterPro" id="IPR046346">
    <property type="entry name" value="Aminoacid_DH-like_N_sf"/>
</dbReference>
<dbReference type="InterPro" id="IPR036291">
    <property type="entry name" value="NAD(P)-bd_dom_sf"/>
</dbReference>
<dbReference type="InterPro" id="IPR000672">
    <property type="entry name" value="THF_DH/CycHdrlase"/>
</dbReference>
<dbReference type="InterPro" id="IPR020630">
    <property type="entry name" value="THF_DH/CycHdrlase_cat_dom"/>
</dbReference>
<dbReference type="InterPro" id="IPR020867">
    <property type="entry name" value="THF_DH/CycHdrlase_CS"/>
</dbReference>
<dbReference type="InterPro" id="IPR020631">
    <property type="entry name" value="THF_DH/CycHdrlase_NAD-bd_dom"/>
</dbReference>
<dbReference type="NCBIfam" id="NF010783">
    <property type="entry name" value="PRK14186.1"/>
    <property type="match status" value="1"/>
</dbReference>
<dbReference type="PANTHER" id="PTHR48099:SF5">
    <property type="entry name" value="C-1-TETRAHYDROFOLATE SYNTHASE, CYTOPLASMIC"/>
    <property type="match status" value="1"/>
</dbReference>
<dbReference type="PANTHER" id="PTHR48099">
    <property type="entry name" value="C-1-TETRAHYDROFOLATE SYNTHASE, CYTOPLASMIC-RELATED"/>
    <property type="match status" value="1"/>
</dbReference>
<dbReference type="Pfam" id="PF00763">
    <property type="entry name" value="THF_DHG_CYH"/>
    <property type="match status" value="1"/>
</dbReference>
<dbReference type="Pfam" id="PF02882">
    <property type="entry name" value="THF_DHG_CYH_C"/>
    <property type="match status" value="1"/>
</dbReference>
<dbReference type="PRINTS" id="PR00085">
    <property type="entry name" value="THFDHDRGNASE"/>
</dbReference>
<dbReference type="SUPFAM" id="SSF53223">
    <property type="entry name" value="Aminoacid dehydrogenase-like, N-terminal domain"/>
    <property type="match status" value="1"/>
</dbReference>
<dbReference type="SUPFAM" id="SSF51735">
    <property type="entry name" value="NAD(P)-binding Rossmann-fold domains"/>
    <property type="match status" value="1"/>
</dbReference>
<dbReference type="PROSITE" id="PS00766">
    <property type="entry name" value="THF_DHG_CYH_1"/>
    <property type="match status" value="1"/>
</dbReference>
<organism>
    <name type="scientific">Salinibacter ruber (strain DSM 13855 / M31)</name>
    <dbReference type="NCBI Taxonomy" id="309807"/>
    <lineage>
        <taxon>Bacteria</taxon>
        <taxon>Pseudomonadati</taxon>
        <taxon>Rhodothermota</taxon>
        <taxon>Rhodothermia</taxon>
        <taxon>Rhodothermales</taxon>
        <taxon>Salinibacteraceae</taxon>
        <taxon>Salinibacter</taxon>
    </lineage>
</organism>
<evidence type="ECO:0000255" key="1">
    <source>
        <dbReference type="HAMAP-Rule" id="MF_01576"/>
    </source>
</evidence>
<gene>
    <name evidence="1" type="primary">folD</name>
    <name type="ordered locus">SRU_1839</name>
</gene>
<protein>
    <recommendedName>
        <fullName evidence="1">Bifunctional protein FolD</fullName>
    </recommendedName>
    <domain>
        <recommendedName>
            <fullName evidence="1">Methylenetetrahydrofolate dehydrogenase</fullName>
            <ecNumber evidence="1">1.5.1.5</ecNumber>
        </recommendedName>
    </domain>
    <domain>
        <recommendedName>
            <fullName evidence="1">Methenyltetrahydrofolate cyclohydrolase</fullName>
            <ecNumber evidence="1">3.5.4.9</ecNumber>
        </recommendedName>
    </domain>
</protein>